<feature type="chain" id="PRO_0000072482" description="Probable S-adenosyl-L-methionine-dependent methyltransferase TehB">
    <location>
        <begin position="1"/>
        <end position="286"/>
    </location>
</feature>
<feature type="binding site" evidence="1">
    <location>
        <position position="128"/>
    </location>
    <ligand>
        <name>S-adenosyl-L-methionine</name>
        <dbReference type="ChEBI" id="CHEBI:59789"/>
    </ligand>
</feature>
<feature type="binding site" evidence="1">
    <location>
        <position position="133"/>
    </location>
    <ligand>
        <name>S-adenosyl-L-methionine</name>
        <dbReference type="ChEBI" id="CHEBI:59789"/>
    </ligand>
</feature>
<feature type="binding site" evidence="1">
    <location>
        <position position="149"/>
    </location>
    <ligand>
        <name>S-adenosyl-L-methionine</name>
        <dbReference type="ChEBI" id="CHEBI:59789"/>
    </ligand>
</feature>
<feature type="binding site" evidence="1">
    <location>
        <begin position="175"/>
        <end position="176"/>
    </location>
    <ligand>
        <name>S-adenosyl-L-methionine</name>
        <dbReference type="ChEBI" id="CHEBI:59789"/>
    </ligand>
</feature>
<feature type="binding site" evidence="1">
    <location>
        <position position="191"/>
    </location>
    <ligand>
        <name>S-adenosyl-L-methionine</name>
        <dbReference type="ChEBI" id="CHEBI:59789"/>
    </ligand>
</feature>
<feature type="turn" evidence="4">
    <location>
        <begin position="2"/>
        <end position="4"/>
    </location>
</feature>
<feature type="strand" evidence="4">
    <location>
        <begin position="5"/>
        <end position="10"/>
    </location>
</feature>
<feature type="turn" evidence="4">
    <location>
        <begin position="16"/>
        <end position="18"/>
    </location>
</feature>
<feature type="helix" evidence="4">
    <location>
        <begin position="21"/>
        <end position="24"/>
    </location>
</feature>
<feature type="strand" evidence="4">
    <location>
        <begin position="25"/>
        <end position="27"/>
    </location>
</feature>
<feature type="strand" evidence="4">
    <location>
        <begin position="34"/>
        <end position="42"/>
    </location>
</feature>
<feature type="strand" evidence="4">
    <location>
        <begin position="44"/>
        <end position="49"/>
    </location>
</feature>
<feature type="strand" evidence="4">
    <location>
        <begin position="55"/>
        <end position="61"/>
    </location>
</feature>
<feature type="strand" evidence="4">
    <location>
        <begin position="76"/>
        <end position="82"/>
    </location>
</feature>
<feature type="strand" evidence="4">
    <location>
        <begin position="86"/>
        <end position="94"/>
    </location>
</feature>
<feature type="helix" evidence="4">
    <location>
        <begin position="95"/>
        <end position="97"/>
    </location>
</feature>
<feature type="helix" evidence="4">
    <location>
        <begin position="98"/>
        <end position="103"/>
    </location>
</feature>
<feature type="helix" evidence="4">
    <location>
        <begin position="110"/>
        <end position="118"/>
    </location>
</feature>
<feature type="strand" evidence="4">
    <location>
        <begin position="123"/>
        <end position="128"/>
    </location>
</feature>
<feature type="helix" evidence="4">
    <location>
        <begin position="133"/>
        <end position="140"/>
    </location>
</feature>
<feature type="strand" evidence="4">
    <location>
        <begin position="144"/>
        <end position="150"/>
    </location>
</feature>
<feature type="helix" evidence="4">
    <location>
        <begin position="152"/>
        <end position="164"/>
    </location>
</feature>
<feature type="strand" evidence="4">
    <location>
        <begin position="169"/>
        <end position="173"/>
    </location>
</feature>
<feature type="helix" evidence="4">
    <location>
        <begin position="176"/>
        <end position="178"/>
    </location>
</feature>
<feature type="strand" evidence="4">
    <location>
        <begin position="185"/>
        <end position="190"/>
    </location>
</feature>
<feature type="helix" evidence="4">
    <location>
        <begin position="194"/>
        <end position="196"/>
    </location>
</feature>
<feature type="helix" evidence="4">
    <location>
        <begin position="199"/>
        <end position="201"/>
    </location>
</feature>
<feature type="helix" evidence="4">
    <location>
        <begin position="202"/>
        <end position="211"/>
    </location>
</feature>
<feature type="strand" evidence="4">
    <location>
        <begin position="213"/>
        <end position="225"/>
    </location>
</feature>
<feature type="strand" evidence="4">
    <location>
        <begin position="228"/>
        <end position="230"/>
    </location>
</feature>
<feature type="helix" evidence="4">
    <location>
        <begin position="244"/>
        <end position="248"/>
    </location>
</feature>
<feature type="turn" evidence="4">
    <location>
        <begin position="249"/>
        <end position="251"/>
    </location>
</feature>
<feature type="strand" evidence="4">
    <location>
        <begin position="252"/>
        <end position="258"/>
    </location>
</feature>
<feature type="strand" evidence="4">
    <location>
        <begin position="261"/>
        <end position="267"/>
    </location>
</feature>
<feature type="strand" evidence="4">
    <location>
        <begin position="273"/>
        <end position="284"/>
    </location>
</feature>
<proteinExistence type="evidence at protein level"/>
<keyword id="KW-0002">3D-structure</keyword>
<keyword id="KW-0489">Methyltransferase</keyword>
<keyword id="KW-1185">Reference proteome</keyword>
<keyword id="KW-0949">S-adenosyl-L-methionine</keyword>
<keyword id="KW-0808">Transferase</keyword>
<sequence length="286" mass="33020">MKNELICYKQMPVWTKDNLPQMFQEKHNTKVGTWGKLTVLKGKLKFYELTENGDVIAEHIFTPESHIPFVEPQAWHRVEALSDDLECTLGFYCKKEDYFSKKYNTTAIHGDVVDAAKIISPCKVLDLGCGQGRNSLYLSLLGYDVTSWDHNENSIAFLNETKEKENLNISTALYDINAANIQENYDFIVSTVVFMFLNRERVPSIIKNMKEHTNVGGYNLIVAAMSTDDVPCPLPFSFTFAENELKEYYKDWEFLEYNENMGELHKTDENGNRIKMKFATMLARKK</sequence>
<gene>
    <name type="primary">tehB</name>
    <name type="ordered locus">HI_1275</name>
</gene>
<protein>
    <recommendedName>
        <fullName>Probable S-adenosyl-L-methionine-dependent methyltransferase TehB</fullName>
        <ecNumber>2.1.1.-</ecNumber>
    </recommendedName>
    <alternativeName>
        <fullName>Tellurite resistance protein TehB homolog</fullName>
    </alternativeName>
</protein>
<accession>P45134</accession>
<organism>
    <name type="scientific">Haemophilus influenzae (strain ATCC 51907 / DSM 11121 / KW20 / Rd)</name>
    <dbReference type="NCBI Taxonomy" id="71421"/>
    <lineage>
        <taxon>Bacteria</taxon>
        <taxon>Pseudomonadati</taxon>
        <taxon>Pseudomonadota</taxon>
        <taxon>Gammaproteobacteria</taxon>
        <taxon>Pasteurellales</taxon>
        <taxon>Pasteurellaceae</taxon>
        <taxon>Haemophilus</taxon>
    </lineage>
</organism>
<reference key="1">
    <citation type="journal article" date="1995" name="Science">
        <title>Whole-genome random sequencing and assembly of Haemophilus influenzae Rd.</title>
        <authorList>
            <person name="Fleischmann R.D."/>
            <person name="Adams M.D."/>
            <person name="White O."/>
            <person name="Clayton R.A."/>
            <person name="Kirkness E.F."/>
            <person name="Kerlavage A.R."/>
            <person name="Bult C.J."/>
            <person name="Tomb J.-F."/>
            <person name="Dougherty B.A."/>
            <person name="Merrick J.M."/>
            <person name="McKenney K."/>
            <person name="Sutton G.G."/>
            <person name="FitzHugh W."/>
            <person name="Fields C.A."/>
            <person name="Gocayne J.D."/>
            <person name="Scott J.D."/>
            <person name="Shirley R."/>
            <person name="Liu L.-I."/>
            <person name="Glodek A."/>
            <person name="Kelley J.M."/>
            <person name="Weidman J.F."/>
            <person name="Phillips C.A."/>
            <person name="Spriggs T."/>
            <person name="Hedblom E."/>
            <person name="Cotton M.D."/>
            <person name="Utterback T.R."/>
            <person name="Hanna M.C."/>
            <person name="Nguyen D.T."/>
            <person name="Saudek D.M."/>
            <person name="Brandon R.C."/>
            <person name="Fine L.D."/>
            <person name="Fritchman J.L."/>
            <person name="Fuhrmann J.L."/>
            <person name="Geoghagen N.S.M."/>
            <person name="Gnehm C.L."/>
            <person name="McDonald L.A."/>
            <person name="Small K.V."/>
            <person name="Fraser C.M."/>
            <person name="Smith H.O."/>
            <person name="Venter J.C."/>
        </authorList>
    </citation>
    <scope>NUCLEOTIDE SEQUENCE [LARGE SCALE GENOMIC DNA]</scope>
    <source>
        <strain>ATCC 51907 / DSM 11121 / KW20 / Rd</strain>
    </source>
</reference>
<reference key="2">
    <citation type="journal article" date="2006" name="J. Bacteriol.">
        <title>Transcriptional profile of Haemophilus influenzae: effects of iron and heme.</title>
        <authorList>
            <person name="Whitby P.W."/>
            <person name="Vanwagoner T.M."/>
            <person name="Seale T.W."/>
            <person name="Morton D.J."/>
            <person name="Stull T.L."/>
        </authorList>
    </citation>
    <scope>INDUCTION</scope>
    <source>
        <strain>ATCC 51907 / DSM 11121 / KW20 / Rd</strain>
    </source>
</reference>
<reference key="3">
    <citation type="submission" date="2010-05" db="PDB data bank">
        <title>Crystal structure of TehB from Haemophilus influenzae.</title>
        <authorList>
            <person name="Chen Y.-H."/>
            <person name="Hendrickson W.A."/>
        </authorList>
    </citation>
    <scope>X-RAY CRYSTALLOGRAPHY (1.95 ANGSTROMS)</scope>
    <source>
        <strain>ATCC 51907 / DSM 11121 / KW20 / Rd</strain>
    </source>
</reference>
<comment type="function">
    <text evidence="1">Probable S-adenosyl-L-methionine-dependent methyltransferase. Plays a role in both resistance to oxidative damage and heme uptake/utilization. Also protects H.influenzae from tellurite exposure in vitro; however, since H.influenzae grows only in humans, it is unlikely to encounter tellurite in its natural environment, and it is thus probable that tellurite resistance does not represent a biologically relevant role of TehB (By similarity).</text>
</comment>
<comment type="induction">
    <text evidence="2">Transcription is significantly up-regulated during growth in iron/heme-restricted conditions.</text>
</comment>
<comment type="similarity">
    <text evidence="3">Belongs to the TehB family.</text>
</comment>
<evidence type="ECO:0000250" key="1"/>
<evidence type="ECO:0000269" key="2">
    <source>
    </source>
</evidence>
<evidence type="ECO:0000305" key="3"/>
<evidence type="ECO:0007829" key="4">
    <source>
        <dbReference type="PDB" id="3M70"/>
    </source>
</evidence>
<name>TEHB_HAEIN</name>
<dbReference type="EC" id="2.1.1.-"/>
<dbReference type="EMBL" id="L42023">
    <property type="protein sequence ID" value="AAC22923.1"/>
    <property type="molecule type" value="Genomic_DNA"/>
</dbReference>
<dbReference type="PIR" id="H64113">
    <property type="entry name" value="H64113"/>
</dbReference>
<dbReference type="RefSeq" id="NP_439428.1">
    <property type="nucleotide sequence ID" value="NC_000907.1"/>
</dbReference>
<dbReference type="PDB" id="3M70">
    <property type="method" value="X-ray"/>
    <property type="resolution" value="1.95 A"/>
    <property type="chains" value="A=1-286"/>
</dbReference>
<dbReference type="PDBsum" id="3M70"/>
<dbReference type="SMR" id="P45134"/>
<dbReference type="STRING" id="71421.HI_1275"/>
<dbReference type="EnsemblBacteria" id="AAC22923">
    <property type="protein sequence ID" value="AAC22923"/>
    <property type="gene ID" value="HI_1275"/>
</dbReference>
<dbReference type="KEGG" id="hin:HI_1275"/>
<dbReference type="PATRIC" id="fig|71421.8.peg.1326"/>
<dbReference type="eggNOG" id="COG0500">
    <property type="taxonomic scope" value="Bacteria"/>
</dbReference>
<dbReference type="eggNOG" id="COG3615">
    <property type="taxonomic scope" value="Bacteria"/>
</dbReference>
<dbReference type="HOGENOM" id="CLU_084458_0_0_6"/>
<dbReference type="OrthoDB" id="9804312at2"/>
<dbReference type="PhylomeDB" id="P45134"/>
<dbReference type="BioCyc" id="HINF71421:G1GJ1-1300-MONOMER"/>
<dbReference type="EvolutionaryTrace" id="P45134"/>
<dbReference type="Proteomes" id="UP000000579">
    <property type="component" value="Chromosome"/>
</dbReference>
<dbReference type="GO" id="GO:0005737">
    <property type="term" value="C:cytoplasm"/>
    <property type="evidence" value="ECO:0007669"/>
    <property type="project" value="InterPro"/>
</dbReference>
<dbReference type="GO" id="GO:0008168">
    <property type="term" value="F:methyltransferase activity"/>
    <property type="evidence" value="ECO:0000318"/>
    <property type="project" value="GO_Central"/>
</dbReference>
<dbReference type="GO" id="GO:0008757">
    <property type="term" value="F:S-adenosylmethionine-dependent methyltransferase activity"/>
    <property type="evidence" value="ECO:0007669"/>
    <property type="project" value="InterPro"/>
</dbReference>
<dbReference type="GO" id="GO:0032259">
    <property type="term" value="P:methylation"/>
    <property type="evidence" value="ECO:0007669"/>
    <property type="project" value="UniProtKB-KW"/>
</dbReference>
<dbReference type="GO" id="GO:0046690">
    <property type="term" value="P:response to tellurium ion"/>
    <property type="evidence" value="ECO:0007669"/>
    <property type="project" value="InterPro"/>
</dbReference>
<dbReference type="CDD" id="cd02440">
    <property type="entry name" value="AdoMet_MTases"/>
    <property type="match status" value="1"/>
</dbReference>
<dbReference type="Gene3D" id="2.60.120.10">
    <property type="entry name" value="Jelly Rolls"/>
    <property type="match status" value="1"/>
</dbReference>
<dbReference type="Gene3D" id="3.40.50.150">
    <property type="entry name" value="Vaccinia Virus protein VP39"/>
    <property type="match status" value="1"/>
</dbReference>
<dbReference type="InterPro" id="IPR015392">
    <property type="entry name" value="DUF1971"/>
</dbReference>
<dbReference type="InterPro" id="IPR014710">
    <property type="entry name" value="RmlC-like_jellyroll"/>
</dbReference>
<dbReference type="InterPro" id="IPR029063">
    <property type="entry name" value="SAM-dependent_MTases_sf"/>
</dbReference>
<dbReference type="InterPro" id="IPR015985">
    <property type="entry name" value="TehB-like_dom"/>
</dbReference>
<dbReference type="InterPro" id="IPR004537">
    <property type="entry name" value="Tellurite-R_MeTrfase_TehB"/>
</dbReference>
<dbReference type="InterPro" id="IPR014431">
    <property type="entry name" value="Tellurite-R_TehB-2"/>
</dbReference>
<dbReference type="NCBIfam" id="NF008405">
    <property type="entry name" value="PRK11207.1"/>
    <property type="match status" value="1"/>
</dbReference>
<dbReference type="NCBIfam" id="NF008992">
    <property type="entry name" value="PRK12335.1"/>
    <property type="match status" value="1"/>
</dbReference>
<dbReference type="NCBIfam" id="TIGR00477">
    <property type="entry name" value="tehB"/>
    <property type="match status" value="1"/>
</dbReference>
<dbReference type="Pfam" id="PF09313">
    <property type="entry name" value="DUF1971"/>
    <property type="match status" value="1"/>
</dbReference>
<dbReference type="Pfam" id="PF03848">
    <property type="entry name" value="TehB"/>
    <property type="match status" value="1"/>
</dbReference>
<dbReference type="PIRSF" id="PIRSF005215">
    <property type="entry name" value="TehB"/>
    <property type="match status" value="1"/>
</dbReference>
<dbReference type="SUPFAM" id="SSF51197">
    <property type="entry name" value="Clavaminate synthase-like"/>
    <property type="match status" value="1"/>
</dbReference>
<dbReference type="SUPFAM" id="SSF53335">
    <property type="entry name" value="S-adenosyl-L-methionine-dependent methyltransferases"/>
    <property type="match status" value="1"/>
</dbReference>